<comment type="function">
    <text evidence="3">Positive regulator of Notch signaling (PubMed:34905536). Maternal neurogenic factor involved in Notch signaling-dependent neuroectodermal specification during early embryogenesis (PubMed:34905536). Functions cooperatively with amx/TM2D3 and amrt/TM2D2 (PubMed:34905536).</text>
</comment>
<comment type="subcellular location">
    <subcellularLocation>
        <location evidence="5">Membrane</location>
        <topology evidence="5">Multi-pass membrane protein</topology>
    </subcellularLocation>
</comment>
<comment type="disruption phenotype">
    <text evidence="3">Viable but females are sterile (PubMed:34905536). Reduced adult lifespan (PubMed:34905536). No morphological defects of the eye, wing, notum or leg (PubMed:34905536). Eggs produced by mutant mothers fail to hatch and embryos display neural hyperplasia (PubMed:34905536).</text>
</comment>
<comment type="miscellaneous">
    <text evidence="4">This protein is named 'biscotti' after the almond flavoured Italian biscuits because of phenotypic and molecular similarities with TM2 domain-containing protein almondex.</text>
</comment>
<comment type="similarity">
    <text evidence="5">Belongs to the TM2 family.</text>
</comment>
<reference key="1">
    <citation type="journal article" date="2000" name="Science">
        <title>The genome sequence of Drosophila melanogaster.</title>
        <authorList>
            <person name="Adams M.D."/>
            <person name="Celniker S.E."/>
            <person name="Holt R.A."/>
            <person name="Evans C.A."/>
            <person name="Gocayne J.D."/>
            <person name="Amanatides P.G."/>
            <person name="Scherer S.E."/>
            <person name="Li P.W."/>
            <person name="Hoskins R.A."/>
            <person name="Galle R.F."/>
            <person name="George R.A."/>
            <person name="Lewis S.E."/>
            <person name="Richards S."/>
            <person name="Ashburner M."/>
            <person name="Henderson S.N."/>
            <person name="Sutton G.G."/>
            <person name="Wortman J.R."/>
            <person name="Yandell M.D."/>
            <person name="Zhang Q."/>
            <person name="Chen L.X."/>
            <person name="Brandon R.C."/>
            <person name="Rogers Y.-H.C."/>
            <person name="Blazej R.G."/>
            <person name="Champe M."/>
            <person name="Pfeiffer B.D."/>
            <person name="Wan K.H."/>
            <person name="Doyle C."/>
            <person name="Baxter E.G."/>
            <person name="Helt G."/>
            <person name="Nelson C.R."/>
            <person name="Miklos G.L.G."/>
            <person name="Abril J.F."/>
            <person name="Agbayani A."/>
            <person name="An H.-J."/>
            <person name="Andrews-Pfannkoch C."/>
            <person name="Baldwin D."/>
            <person name="Ballew R.M."/>
            <person name="Basu A."/>
            <person name="Baxendale J."/>
            <person name="Bayraktaroglu L."/>
            <person name="Beasley E.M."/>
            <person name="Beeson K.Y."/>
            <person name="Benos P.V."/>
            <person name="Berman B.P."/>
            <person name="Bhandari D."/>
            <person name="Bolshakov S."/>
            <person name="Borkova D."/>
            <person name="Botchan M.R."/>
            <person name="Bouck J."/>
            <person name="Brokstein P."/>
            <person name="Brottier P."/>
            <person name="Burtis K.C."/>
            <person name="Busam D.A."/>
            <person name="Butler H."/>
            <person name="Cadieu E."/>
            <person name="Center A."/>
            <person name="Chandra I."/>
            <person name="Cherry J.M."/>
            <person name="Cawley S."/>
            <person name="Dahlke C."/>
            <person name="Davenport L.B."/>
            <person name="Davies P."/>
            <person name="de Pablos B."/>
            <person name="Delcher A."/>
            <person name="Deng Z."/>
            <person name="Mays A.D."/>
            <person name="Dew I."/>
            <person name="Dietz S.M."/>
            <person name="Dodson K."/>
            <person name="Doup L.E."/>
            <person name="Downes M."/>
            <person name="Dugan-Rocha S."/>
            <person name="Dunkov B.C."/>
            <person name="Dunn P."/>
            <person name="Durbin K.J."/>
            <person name="Evangelista C.C."/>
            <person name="Ferraz C."/>
            <person name="Ferriera S."/>
            <person name="Fleischmann W."/>
            <person name="Fosler C."/>
            <person name="Gabrielian A.E."/>
            <person name="Garg N.S."/>
            <person name="Gelbart W.M."/>
            <person name="Glasser K."/>
            <person name="Glodek A."/>
            <person name="Gong F."/>
            <person name="Gorrell J.H."/>
            <person name="Gu Z."/>
            <person name="Guan P."/>
            <person name="Harris M."/>
            <person name="Harris N.L."/>
            <person name="Harvey D.A."/>
            <person name="Heiman T.J."/>
            <person name="Hernandez J.R."/>
            <person name="Houck J."/>
            <person name="Hostin D."/>
            <person name="Houston K.A."/>
            <person name="Howland T.J."/>
            <person name="Wei M.-H."/>
            <person name="Ibegwam C."/>
            <person name="Jalali M."/>
            <person name="Kalush F."/>
            <person name="Karpen G.H."/>
            <person name="Ke Z."/>
            <person name="Kennison J.A."/>
            <person name="Ketchum K.A."/>
            <person name="Kimmel B.E."/>
            <person name="Kodira C.D."/>
            <person name="Kraft C.L."/>
            <person name="Kravitz S."/>
            <person name="Kulp D."/>
            <person name="Lai Z."/>
            <person name="Lasko P."/>
            <person name="Lei Y."/>
            <person name="Levitsky A.A."/>
            <person name="Li J.H."/>
            <person name="Li Z."/>
            <person name="Liang Y."/>
            <person name="Lin X."/>
            <person name="Liu X."/>
            <person name="Mattei B."/>
            <person name="McIntosh T.C."/>
            <person name="McLeod M.P."/>
            <person name="McPherson D."/>
            <person name="Merkulov G."/>
            <person name="Milshina N.V."/>
            <person name="Mobarry C."/>
            <person name="Morris J."/>
            <person name="Moshrefi A."/>
            <person name="Mount S.M."/>
            <person name="Moy M."/>
            <person name="Murphy B."/>
            <person name="Murphy L."/>
            <person name="Muzny D.M."/>
            <person name="Nelson D.L."/>
            <person name="Nelson D.R."/>
            <person name="Nelson K.A."/>
            <person name="Nixon K."/>
            <person name="Nusskern D.R."/>
            <person name="Pacleb J.M."/>
            <person name="Palazzolo M."/>
            <person name="Pittman G.S."/>
            <person name="Pan S."/>
            <person name="Pollard J."/>
            <person name="Puri V."/>
            <person name="Reese M.G."/>
            <person name="Reinert K."/>
            <person name="Remington K."/>
            <person name="Saunders R.D.C."/>
            <person name="Scheeler F."/>
            <person name="Shen H."/>
            <person name="Shue B.C."/>
            <person name="Siden-Kiamos I."/>
            <person name="Simpson M."/>
            <person name="Skupski M.P."/>
            <person name="Smith T.J."/>
            <person name="Spier E."/>
            <person name="Spradling A.C."/>
            <person name="Stapleton M."/>
            <person name="Strong R."/>
            <person name="Sun E."/>
            <person name="Svirskas R."/>
            <person name="Tector C."/>
            <person name="Turner R."/>
            <person name="Venter E."/>
            <person name="Wang A.H."/>
            <person name="Wang X."/>
            <person name="Wang Z.-Y."/>
            <person name="Wassarman D.A."/>
            <person name="Weinstock G.M."/>
            <person name="Weissenbach J."/>
            <person name="Williams S.M."/>
            <person name="Woodage T."/>
            <person name="Worley K.C."/>
            <person name="Wu D."/>
            <person name="Yang S."/>
            <person name="Yao Q.A."/>
            <person name="Ye J."/>
            <person name="Yeh R.-F."/>
            <person name="Zaveri J.S."/>
            <person name="Zhan M."/>
            <person name="Zhang G."/>
            <person name="Zhao Q."/>
            <person name="Zheng L."/>
            <person name="Zheng X.H."/>
            <person name="Zhong F.N."/>
            <person name="Zhong W."/>
            <person name="Zhou X."/>
            <person name="Zhu S.C."/>
            <person name="Zhu X."/>
            <person name="Smith H.O."/>
            <person name="Gibbs R.A."/>
            <person name="Myers E.W."/>
            <person name="Rubin G.M."/>
            <person name="Venter J.C."/>
        </authorList>
    </citation>
    <scope>NUCLEOTIDE SEQUENCE [LARGE SCALE GENOMIC DNA]</scope>
    <source>
        <strain>Berkeley</strain>
    </source>
</reference>
<reference key="2">
    <citation type="journal article" date="2002" name="Genome Biol.">
        <title>Annotation of the Drosophila melanogaster euchromatic genome: a systematic review.</title>
        <authorList>
            <person name="Misra S."/>
            <person name="Crosby M.A."/>
            <person name="Mungall C.J."/>
            <person name="Matthews B.B."/>
            <person name="Campbell K.S."/>
            <person name="Hradecky P."/>
            <person name="Huang Y."/>
            <person name="Kaminker J.S."/>
            <person name="Millburn G.H."/>
            <person name="Prochnik S.E."/>
            <person name="Smith C.D."/>
            <person name="Tupy J.L."/>
            <person name="Whitfield E.J."/>
            <person name="Bayraktaroglu L."/>
            <person name="Berman B.P."/>
            <person name="Bettencourt B.R."/>
            <person name="Celniker S.E."/>
            <person name="de Grey A.D.N.J."/>
            <person name="Drysdale R.A."/>
            <person name="Harris N.L."/>
            <person name="Richter J."/>
            <person name="Russo S."/>
            <person name="Schroeder A.J."/>
            <person name="Shu S.Q."/>
            <person name="Stapleton M."/>
            <person name="Yamada C."/>
            <person name="Ashburner M."/>
            <person name="Gelbart W.M."/>
            <person name="Rubin G.M."/>
            <person name="Lewis S.E."/>
        </authorList>
    </citation>
    <scope>GENOME REANNOTATION</scope>
    <source>
        <strain>Berkeley</strain>
    </source>
</reference>
<reference key="3">
    <citation type="journal article" date="2002" name="Genome Biol.">
        <title>A Drosophila full-length cDNA resource.</title>
        <authorList>
            <person name="Stapleton M."/>
            <person name="Carlson J.W."/>
            <person name="Brokstein P."/>
            <person name="Yu C."/>
            <person name="Champe M."/>
            <person name="George R.A."/>
            <person name="Guarin H."/>
            <person name="Kronmiller B."/>
            <person name="Pacleb J.M."/>
            <person name="Park S."/>
            <person name="Wan K.H."/>
            <person name="Rubin G.M."/>
            <person name="Celniker S.E."/>
        </authorList>
    </citation>
    <scope>NUCLEOTIDE SEQUENCE [LARGE SCALE MRNA]</scope>
    <source>
        <strain>Berkeley</strain>
        <tissue>Embryo</tissue>
    </source>
</reference>
<reference key="4">
    <citation type="journal article" date="2021" name="PLoS Genet.">
        <title>TM2D genes regulate Notch signaling and neuronal function in Drosophila.</title>
        <authorList>
            <person name="Salazar J.L."/>
            <person name="Yang S.A."/>
            <person name="Lin Y.Q."/>
            <person name="Li-Kroeger D."/>
            <person name="Marcogliese P.C."/>
            <person name="Deal S.L."/>
            <person name="Neely G.G."/>
            <person name="Yamamoto S."/>
        </authorList>
    </citation>
    <scope>FUNCTION</scope>
    <scope>DISRUPTION PHENOTYPE</scope>
</reference>
<evidence type="ECO:0000255" key="1"/>
<evidence type="ECO:0000255" key="2">
    <source>
        <dbReference type="PROSITE-ProRule" id="PRU00498"/>
    </source>
</evidence>
<evidence type="ECO:0000269" key="3">
    <source>
    </source>
</evidence>
<evidence type="ECO:0000303" key="4">
    <source>
    </source>
</evidence>
<evidence type="ECO:0000305" key="5"/>
<evidence type="ECO:0000312" key="6">
    <source>
        <dbReference type="FlyBase" id="FBgn0034626"/>
    </source>
</evidence>
<evidence type="ECO:0000312" key="7">
    <source>
        <dbReference type="Proteomes" id="UP000000803"/>
    </source>
</evidence>
<sequence>MFPVLLLLLFFFAKETHQINVDCNELQMMGQFMCPDPARGQIDPKTQQLAGCTREGRARVWCIAANEINCTETGNATFTREVPCKWTNGYHLDTTLLLSVFLGMFGVDRFYLGYPGIGLLKFCTLGGMFLGQLIDIVLIALQVVGPADGSAYVIPYYGAGIHIVRSDNTTYRLPRDDW</sequence>
<keyword id="KW-0325">Glycoprotein</keyword>
<keyword id="KW-0472">Membrane</keyword>
<keyword id="KW-1185">Reference proteome</keyword>
<keyword id="KW-0732">Signal</keyword>
<keyword id="KW-0812">Transmembrane</keyword>
<keyword id="KW-1133">Transmembrane helix</keyword>
<name>TM2D1_DROME</name>
<organism evidence="7">
    <name type="scientific">Drosophila melanogaster</name>
    <name type="common">Fruit fly</name>
    <dbReference type="NCBI Taxonomy" id="7227"/>
    <lineage>
        <taxon>Eukaryota</taxon>
        <taxon>Metazoa</taxon>
        <taxon>Ecdysozoa</taxon>
        <taxon>Arthropoda</taxon>
        <taxon>Hexapoda</taxon>
        <taxon>Insecta</taxon>
        <taxon>Pterygota</taxon>
        <taxon>Neoptera</taxon>
        <taxon>Endopterygota</taxon>
        <taxon>Diptera</taxon>
        <taxon>Brachycera</taxon>
        <taxon>Muscomorpha</taxon>
        <taxon>Ephydroidea</taxon>
        <taxon>Drosophilidae</taxon>
        <taxon>Drosophila</taxon>
        <taxon>Sophophora</taxon>
    </lineage>
</organism>
<protein>
    <recommendedName>
        <fullName evidence="4">TM2 domain-containing protein biscotti</fullName>
        <shortName evidence="5">TM2D1</shortName>
    </recommendedName>
</protein>
<dbReference type="EMBL" id="AE013599">
    <property type="protein sequence ID" value="AAF46720.1"/>
    <property type="molecule type" value="Genomic_DNA"/>
</dbReference>
<dbReference type="EMBL" id="AY061343">
    <property type="protein sequence ID" value="AAL28891.1"/>
    <property type="molecule type" value="mRNA"/>
</dbReference>
<dbReference type="RefSeq" id="NP_611583.1">
    <property type="nucleotide sequence ID" value="NM_137739.3"/>
</dbReference>
<dbReference type="BioGRID" id="63073">
    <property type="interactions" value="1"/>
</dbReference>
<dbReference type="FunCoup" id="Q9W2H1">
    <property type="interactions" value="849"/>
</dbReference>
<dbReference type="IntAct" id="Q9W2H1">
    <property type="interactions" value="1"/>
</dbReference>
<dbReference type="STRING" id="7227.FBpp0423125"/>
<dbReference type="GlyGen" id="Q9W2H1">
    <property type="glycosylation" value="3 sites"/>
</dbReference>
<dbReference type="PaxDb" id="7227-FBpp0071535"/>
<dbReference type="DNASU" id="37443"/>
<dbReference type="EnsemblMetazoa" id="FBtr0071609">
    <property type="protein sequence ID" value="FBpp0071535"/>
    <property type="gene ID" value="FBgn0034626"/>
</dbReference>
<dbReference type="GeneID" id="37443"/>
<dbReference type="KEGG" id="dme:Dmel_CG10795"/>
<dbReference type="UCSC" id="CG10795-RA">
    <property type="organism name" value="d. melanogaster"/>
</dbReference>
<dbReference type="AGR" id="FB:FBgn0034626"/>
<dbReference type="CTD" id="37443"/>
<dbReference type="FlyBase" id="FBgn0034626">
    <property type="gene designation" value="bisc"/>
</dbReference>
<dbReference type="VEuPathDB" id="VectorBase:FBgn0034626"/>
<dbReference type="eggNOG" id="KOG4272">
    <property type="taxonomic scope" value="Eukaryota"/>
</dbReference>
<dbReference type="GeneTree" id="ENSGT00940000157668"/>
<dbReference type="HOGENOM" id="CLU_110523_0_0_1"/>
<dbReference type="InParanoid" id="Q9W2H1"/>
<dbReference type="OMA" id="ETFRKPH"/>
<dbReference type="OrthoDB" id="5804096at2759"/>
<dbReference type="PhylomeDB" id="Q9W2H1"/>
<dbReference type="BioGRID-ORCS" id="37443">
    <property type="hits" value="0 hits in 1 CRISPR screen"/>
</dbReference>
<dbReference type="GenomeRNAi" id="37443"/>
<dbReference type="PRO" id="PR:Q9W2H1"/>
<dbReference type="Proteomes" id="UP000000803">
    <property type="component" value="Chromosome 2R"/>
</dbReference>
<dbReference type="Bgee" id="FBgn0034626">
    <property type="expression patterns" value="Expressed in adult abdomen and 77 other cell types or tissues"/>
</dbReference>
<dbReference type="ExpressionAtlas" id="Q9W2H1">
    <property type="expression patterns" value="baseline and differential"/>
</dbReference>
<dbReference type="GO" id="GO:0005886">
    <property type="term" value="C:plasma membrane"/>
    <property type="evidence" value="ECO:0000255"/>
    <property type="project" value="FlyBase"/>
</dbReference>
<dbReference type="GO" id="GO:0045747">
    <property type="term" value="P:positive regulation of Notch signaling pathway"/>
    <property type="evidence" value="ECO:0000316"/>
    <property type="project" value="FlyBase"/>
</dbReference>
<dbReference type="InterPro" id="IPR007829">
    <property type="entry name" value="TM2"/>
</dbReference>
<dbReference type="InterPro" id="IPR050932">
    <property type="entry name" value="TM2D1-3-like"/>
</dbReference>
<dbReference type="PANTHER" id="PTHR21016">
    <property type="entry name" value="BETA-AMYLOID BINDING PROTEIN-RELATED"/>
    <property type="match status" value="1"/>
</dbReference>
<dbReference type="PANTHER" id="PTHR21016:SF1">
    <property type="entry name" value="TM2 DOMAIN-CONTAINING PROTEIN 1"/>
    <property type="match status" value="1"/>
</dbReference>
<dbReference type="Pfam" id="PF05154">
    <property type="entry name" value="TM2"/>
    <property type="match status" value="1"/>
</dbReference>
<proteinExistence type="evidence at transcript level"/>
<feature type="signal peptide" evidence="1">
    <location>
        <begin position="1"/>
        <end position="18"/>
    </location>
</feature>
<feature type="chain" id="PRO_0000298997" description="TM2 domain-containing protein biscotti">
    <location>
        <begin position="19"/>
        <end position="178"/>
    </location>
</feature>
<feature type="topological domain" description="Extracellular" evidence="5">
    <location>
        <begin position="19"/>
        <end position="99"/>
    </location>
</feature>
<feature type="transmembrane region" description="Helical" evidence="1">
    <location>
        <begin position="100"/>
        <end position="120"/>
    </location>
</feature>
<feature type="topological domain" description="Cytoplasmic" evidence="5">
    <location>
        <begin position="121"/>
        <end position="124"/>
    </location>
</feature>
<feature type="transmembrane region" description="Helical" evidence="1">
    <location>
        <begin position="125"/>
        <end position="145"/>
    </location>
</feature>
<feature type="topological domain" description="Extracellular" evidence="5">
    <location>
        <begin position="146"/>
        <end position="178"/>
    </location>
</feature>
<feature type="domain" description="TM2" evidence="1">
    <location>
        <begin position="94"/>
        <end position="137"/>
    </location>
</feature>
<feature type="glycosylation site" description="N-linked (GlcNAc...) asparagine" evidence="2">
    <location>
        <position position="69"/>
    </location>
</feature>
<feature type="glycosylation site" description="N-linked (GlcNAc...) asparagine" evidence="2">
    <location>
        <position position="75"/>
    </location>
</feature>
<feature type="glycosylation site" description="N-linked (GlcNAc...) asparagine" evidence="2">
    <location>
        <position position="168"/>
    </location>
</feature>
<gene>
    <name evidence="4 6" type="primary">bisc</name>
    <name evidence="6" type="ORF">CG10795</name>
</gene>
<accession>Q9W2H1</accession>